<feature type="chain" id="PRO_1000128132" description="Small ribosomal subunit protein uS9">
    <location>
        <begin position="1"/>
        <end position="129"/>
    </location>
</feature>
<keyword id="KW-0687">Ribonucleoprotein</keyword>
<keyword id="KW-0689">Ribosomal protein</keyword>
<organism>
    <name type="scientific">Helicobacter pylori (strain Shi470)</name>
    <dbReference type="NCBI Taxonomy" id="512562"/>
    <lineage>
        <taxon>Bacteria</taxon>
        <taxon>Pseudomonadati</taxon>
        <taxon>Campylobacterota</taxon>
        <taxon>Epsilonproteobacteria</taxon>
        <taxon>Campylobacterales</taxon>
        <taxon>Helicobacteraceae</taxon>
        <taxon>Helicobacter</taxon>
    </lineage>
</organism>
<gene>
    <name evidence="1" type="primary">rpsI</name>
    <name type="ordered locus">HPSH_00405</name>
</gene>
<protein>
    <recommendedName>
        <fullName evidence="1">Small ribosomal subunit protein uS9</fullName>
    </recommendedName>
    <alternativeName>
        <fullName evidence="2">30S ribosomal protein S9</fullName>
    </alternativeName>
</protein>
<reference key="1">
    <citation type="submission" date="2008-05" db="EMBL/GenBank/DDBJ databases">
        <title>Genome sequence of Helicobacter pylori from the remote Amazon: traces of Asian ancestry of the first Americans.</title>
        <authorList>
            <person name="Kersulyte D."/>
            <person name="Kalia A."/>
            <person name="Gilman R.H."/>
            <person name="Berg D.E."/>
        </authorList>
    </citation>
    <scope>NUCLEOTIDE SEQUENCE [LARGE SCALE GENOMIC DNA]</scope>
    <source>
        <strain>Shi470</strain>
    </source>
</reference>
<sequence length="129" mass="14494">MRKIYATGKRKTAIAKVWLTPGKGELSINEQSLNQWLGGHEAIKMKVMQPLLLTKQEQSVDIKAVVFGGGYSAQAEALRHGISKALNAYDIAFRAVLKPKGLLTRDSRVVERKKYGKRKARRSPQFSKR</sequence>
<evidence type="ECO:0000255" key="1">
    <source>
        <dbReference type="HAMAP-Rule" id="MF_00532"/>
    </source>
</evidence>
<evidence type="ECO:0000305" key="2"/>
<comment type="similarity">
    <text evidence="1">Belongs to the universal ribosomal protein uS9 family.</text>
</comment>
<accession>B2URR4</accession>
<dbReference type="EMBL" id="CP001072">
    <property type="protein sequence ID" value="ACD47546.1"/>
    <property type="molecule type" value="Genomic_DNA"/>
</dbReference>
<dbReference type="RefSeq" id="WP_001227270.1">
    <property type="nucleotide sequence ID" value="NC_010698.2"/>
</dbReference>
<dbReference type="SMR" id="B2URR4"/>
<dbReference type="KEGG" id="hps:HPSH_00405"/>
<dbReference type="HOGENOM" id="CLU_046483_2_1_7"/>
<dbReference type="GO" id="GO:0022627">
    <property type="term" value="C:cytosolic small ribosomal subunit"/>
    <property type="evidence" value="ECO:0007669"/>
    <property type="project" value="TreeGrafter"/>
</dbReference>
<dbReference type="GO" id="GO:0003723">
    <property type="term" value="F:RNA binding"/>
    <property type="evidence" value="ECO:0007669"/>
    <property type="project" value="TreeGrafter"/>
</dbReference>
<dbReference type="GO" id="GO:0003735">
    <property type="term" value="F:structural constituent of ribosome"/>
    <property type="evidence" value="ECO:0007669"/>
    <property type="project" value="InterPro"/>
</dbReference>
<dbReference type="GO" id="GO:0006412">
    <property type="term" value="P:translation"/>
    <property type="evidence" value="ECO:0007669"/>
    <property type="project" value="UniProtKB-UniRule"/>
</dbReference>
<dbReference type="FunFam" id="3.30.230.10:FF:000025">
    <property type="entry name" value="30S ribosomal protein S9"/>
    <property type="match status" value="1"/>
</dbReference>
<dbReference type="Gene3D" id="3.30.230.10">
    <property type="match status" value="1"/>
</dbReference>
<dbReference type="HAMAP" id="MF_00532_B">
    <property type="entry name" value="Ribosomal_uS9_B"/>
    <property type="match status" value="1"/>
</dbReference>
<dbReference type="InterPro" id="IPR020568">
    <property type="entry name" value="Ribosomal_Su5_D2-typ_SF"/>
</dbReference>
<dbReference type="InterPro" id="IPR000754">
    <property type="entry name" value="Ribosomal_uS9"/>
</dbReference>
<dbReference type="InterPro" id="IPR023035">
    <property type="entry name" value="Ribosomal_uS9_bac/plastid"/>
</dbReference>
<dbReference type="InterPro" id="IPR020574">
    <property type="entry name" value="Ribosomal_uS9_CS"/>
</dbReference>
<dbReference type="InterPro" id="IPR014721">
    <property type="entry name" value="Ribsml_uS5_D2-typ_fold_subgr"/>
</dbReference>
<dbReference type="NCBIfam" id="NF001099">
    <property type="entry name" value="PRK00132.1"/>
    <property type="match status" value="1"/>
</dbReference>
<dbReference type="PANTHER" id="PTHR21569">
    <property type="entry name" value="RIBOSOMAL PROTEIN S9"/>
    <property type="match status" value="1"/>
</dbReference>
<dbReference type="PANTHER" id="PTHR21569:SF1">
    <property type="entry name" value="SMALL RIBOSOMAL SUBUNIT PROTEIN US9M"/>
    <property type="match status" value="1"/>
</dbReference>
<dbReference type="Pfam" id="PF00380">
    <property type="entry name" value="Ribosomal_S9"/>
    <property type="match status" value="1"/>
</dbReference>
<dbReference type="SUPFAM" id="SSF54211">
    <property type="entry name" value="Ribosomal protein S5 domain 2-like"/>
    <property type="match status" value="1"/>
</dbReference>
<dbReference type="PROSITE" id="PS00360">
    <property type="entry name" value="RIBOSOMAL_S9"/>
    <property type="match status" value="1"/>
</dbReference>
<proteinExistence type="inferred from homology"/>
<name>RS9_HELPS</name>